<name>CARP3_CANAL</name>
<gene>
    <name evidence="19" type="primary">SAP3</name>
    <name type="ordered locus">CAALFM_C305230WA</name>
    <name type="ORF">CaO19.13422</name>
    <name type="ORF">CaO19.6001</name>
</gene>
<keyword id="KW-0002">3D-structure</keyword>
<keyword id="KW-0064">Aspartyl protease</keyword>
<keyword id="KW-0165">Cleavage on pair of basic residues</keyword>
<keyword id="KW-1015">Disulfide bond</keyword>
<keyword id="KW-0325">Glycoprotein</keyword>
<keyword id="KW-0378">Hydrolase</keyword>
<keyword id="KW-0645">Protease</keyword>
<keyword id="KW-1185">Reference proteome</keyword>
<keyword id="KW-0964">Secreted</keyword>
<keyword id="KW-0732">Signal</keyword>
<keyword id="KW-0843">Virulence</keyword>
<keyword id="KW-0865">Zymogen</keyword>
<dbReference type="EC" id="3.4.23.24" evidence="11 15 17 18"/>
<dbReference type="EMBL" id="CP017625">
    <property type="protein sequence ID" value="AOW28538.1"/>
    <property type="molecule type" value="Genomic_DNA"/>
</dbReference>
<dbReference type="RefSeq" id="XP_723210.1">
    <property type="nucleotide sequence ID" value="XM_718117.1"/>
</dbReference>
<dbReference type="PDB" id="2H6S">
    <property type="method" value="X-ray"/>
    <property type="resolution" value="2.20 A"/>
    <property type="chains" value="A=59-398"/>
</dbReference>
<dbReference type="PDB" id="2H6T">
    <property type="method" value="X-ray"/>
    <property type="resolution" value="1.90 A"/>
    <property type="chains" value="A=59-398"/>
</dbReference>
<dbReference type="PDBsum" id="2H6S"/>
<dbReference type="PDBsum" id="2H6T"/>
<dbReference type="SMR" id="P0CY29"/>
<dbReference type="STRING" id="237561.P0CY29"/>
<dbReference type="MEROPS" id="A01.061"/>
<dbReference type="GlyCosmos" id="P0CY29">
    <property type="glycosylation" value="2 sites, No reported glycans"/>
</dbReference>
<dbReference type="EnsemblFungi" id="C3_05230W_A-T">
    <property type="protein sequence ID" value="C3_05230W_A-T-p1"/>
    <property type="gene ID" value="C3_05230W_A"/>
</dbReference>
<dbReference type="GeneID" id="3635197"/>
<dbReference type="KEGG" id="cal:CAALFM_C305230WA"/>
<dbReference type="CGD" id="CAL0000201569">
    <property type="gene designation" value="SAP3"/>
</dbReference>
<dbReference type="VEuPathDB" id="FungiDB:C3_05230W_A"/>
<dbReference type="eggNOG" id="KOG1339">
    <property type="taxonomic scope" value="Eukaryota"/>
</dbReference>
<dbReference type="HOGENOM" id="CLU_013253_9_1_1"/>
<dbReference type="InParanoid" id="P0CY29"/>
<dbReference type="OMA" id="SISEPNW"/>
<dbReference type="OrthoDB" id="771136at2759"/>
<dbReference type="BRENDA" id="3.4.23.24">
    <property type="organism ID" value="1096"/>
</dbReference>
<dbReference type="EvolutionaryTrace" id="P0CY29"/>
<dbReference type="PHI-base" id="PHI:6785"/>
<dbReference type="PHI-base" id="PHI:6791"/>
<dbReference type="PHI-base" id="PHI:6813"/>
<dbReference type="PRO" id="PR:P0CY29"/>
<dbReference type="Proteomes" id="UP000000559">
    <property type="component" value="Chromosome 3"/>
</dbReference>
<dbReference type="GO" id="GO:0005576">
    <property type="term" value="C:extracellular region"/>
    <property type="evidence" value="ECO:0000314"/>
    <property type="project" value="CGD"/>
</dbReference>
<dbReference type="GO" id="GO:1903561">
    <property type="term" value="C:extracellular vesicle"/>
    <property type="evidence" value="ECO:0000314"/>
    <property type="project" value="CGD"/>
</dbReference>
<dbReference type="GO" id="GO:0009277">
    <property type="term" value="C:fungal-type cell wall"/>
    <property type="evidence" value="ECO:0000318"/>
    <property type="project" value="GO_Central"/>
</dbReference>
<dbReference type="GO" id="GO:0004190">
    <property type="term" value="F:aspartic-type endopeptidase activity"/>
    <property type="evidence" value="ECO:0000314"/>
    <property type="project" value="UniProtKB"/>
</dbReference>
<dbReference type="GO" id="GO:0044406">
    <property type="term" value="P:adhesion of symbiont to host"/>
    <property type="evidence" value="ECO:0000315"/>
    <property type="project" value="CGD"/>
</dbReference>
<dbReference type="GO" id="GO:0031505">
    <property type="term" value="P:fungal-type cell wall organization"/>
    <property type="evidence" value="ECO:0000318"/>
    <property type="project" value="GO_Central"/>
</dbReference>
<dbReference type="GO" id="GO:0030163">
    <property type="term" value="P:protein catabolic process"/>
    <property type="evidence" value="ECO:0000315"/>
    <property type="project" value="CGD"/>
</dbReference>
<dbReference type="GO" id="GO:0006508">
    <property type="term" value="P:proteolysis"/>
    <property type="evidence" value="ECO:0000314"/>
    <property type="project" value="UniProtKB"/>
</dbReference>
<dbReference type="GO" id="GO:0006465">
    <property type="term" value="P:signal peptide processing"/>
    <property type="evidence" value="ECO:0000314"/>
    <property type="project" value="CGD"/>
</dbReference>
<dbReference type="GO" id="GO:0035756">
    <property type="term" value="P:symbiont-mediated migration across host transepithelium"/>
    <property type="evidence" value="ECO:0000315"/>
    <property type="project" value="CGD"/>
</dbReference>
<dbReference type="CDD" id="cd05474">
    <property type="entry name" value="SAP_like"/>
    <property type="match status" value="1"/>
</dbReference>
<dbReference type="FunFam" id="2.40.70.10:FF:000011">
    <property type="entry name" value="Aspartic protease"/>
    <property type="match status" value="1"/>
</dbReference>
<dbReference type="FunFam" id="2.40.70.10:FF:000023">
    <property type="entry name" value="Aspartic protease"/>
    <property type="match status" value="1"/>
</dbReference>
<dbReference type="Gene3D" id="2.40.70.10">
    <property type="entry name" value="Acid Proteases"/>
    <property type="match status" value="2"/>
</dbReference>
<dbReference type="InterPro" id="IPR001461">
    <property type="entry name" value="Aspartic_peptidase_A1"/>
</dbReference>
<dbReference type="InterPro" id="IPR001969">
    <property type="entry name" value="Aspartic_peptidase_AS"/>
</dbReference>
<dbReference type="InterPro" id="IPR033121">
    <property type="entry name" value="PEPTIDASE_A1"/>
</dbReference>
<dbReference type="InterPro" id="IPR021109">
    <property type="entry name" value="Peptidase_aspartic_dom_sf"/>
</dbReference>
<dbReference type="InterPro" id="IPR033876">
    <property type="entry name" value="SAP-like"/>
</dbReference>
<dbReference type="PANTHER" id="PTHR47966:SF65">
    <property type="entry name" value="ASPARTIC-TYPE ENDOPEPTIDASE"/>
    <property type="match status" value="1"/>
</dbReference>
<dbReference type="PANTHER" id="PTHR47966">
    <property type="entry name" value="BETA-SITE APP-CLEAVING ENZYME, ISOFORM A-RELATED"/>
    <property type="match status" value="1"/>
</dbReference>
<dbReference type="Pfam" id="PF00026">
    <property type="entry name" value="Asp"/>
    <property type="match status" value="1"/>
</dbReference>
<dbReference type="PRINTS" id="PR00792">
    <property type="entry name" value="PEPSIN"/>
</dbReference>
<dbReference type="SUPFAM" id="SSF50630">
    <property type="entry name" value="Acid proteases"/>
    <property type="match status" value="1"/>
</dbReference>
<dbReference type="PROSITE" id="PS00141">
    <property type="entry name" value="ASP_PROTEASE"/>
    <property type="match status" value="2"/>
</dbReference>
<dbReference type="PROSITE" id="PS51767">
    <property type="entry name" value="PEPTIDASE_A1"/>
    <property type="match status" value="1"/>
</dbReference>
<evidence type="ECO:0000250" key="1"/>
<evidence type="ECO:0000250" key="2">
    <source>
        <dbReference type="UniProtKB" id="P0CS83"/>
    </source>
</evidence>
<evidence type="ECO:0000250" key="3">
    <source>
        <dbReference type="UniProtKB" id="P0CY27"/>
    </source>
</evidence>
<evidence type="ECO:0000255" key="4"/>
<evidence type="ECO:0000255" key="5">
    <source>
        <dbReference type="PROSITE-ProRule" id="PRU01103"/>
    </source>
</evidence>
<evidence type="ECO:0000256" key="6">
    <source>
        <dbReference type="SAM" id="MobiDB-lite"/>
    </source>
</evidence>
<evidence type="ECO:0000269" key="7">
    <source>
    </source>
</evidence>
<evidence type="ECO:0000269" key="8">
    <source>
    </source>
</evidence>
<evidence type="ECO:0000269" key="9">
    <source>
    </source>
</evidence>
<evidence type="ECO:0000269" key="10">
    <source>
    </source>
</evidence>
<evidence type="ECO:0000269" key="11">
    <source>
    </source>
</evidence>
<evidence type="ECO:0000269" key="12">
    <source>
    </source>
</evidence>
<evidence type="ECO:0000269" key="13">
    <source>
    </source>
</evidence>
<evidence type="ECO:0000269" key="14">
    <source>
    </source>
</evidence>
<evidence type="ECO:0000269" key="15">
    <source>
    </source>
</evidence>
<evidence type="ECO:0000269" key="16">
    <source>
    </source>
</evidence>
<evidence type="ECO:0000269" key="17">
    <source>
    </source>
</evidence>
<evidence type="ECO:0000269" key="18">
    <source>
    </source>
</evidence>
<evidence type="ECO:0000303" key="19">
    <source>
    </source>
</evidence>
<evidence type="ECO:0000305" key="20"/>
<evidence type="ECO:0007744" key="21">
    <source>
        <dbReference type="PDB" id="2H6S"/>
    </source>
</evidence>
<evidence type="ECO:0007744" key="22">
    <source>
        <dbReference type="PDB" id="2H6T"/>
    </source>
</evidence>
<evidence type="ECO:0007829" key="23">
    <source>
        <dbReference type="PDB" id="2H6T"/>
    </source>
</evidence>
<feature type="signal peptide" evidence="4">
    <location>
        <begin position="1"/>
        <end position="18"/>
    </location>
</feature>
<feature type="propeptide" id="PRO_0000413052" description="Activation peptide" evidence="1">
    <location>
        <begin position="19"/>
        <end position="58"/>
    </location>
</feature>
<feature type="chain" id="PRO_0000413053" description="Secreted aspartic protease 3">
    <location>
        <begin position="59"/>
        <end position="398"/>
    </location>
</feature>
<feature type="domain" description="Peptidase A1" evidence="5">
    <location>
        <begin position="72"/>
        <end position="384"/>
    </location>
</feature>
<feature type="region of interest" description="Disordered" evidence="6">
    <location>
        <begin position="103"/>
        <end position="139"/>
    </location>
</feature>
<feature type="compositionally biased region" description="Polar residues" evidence="6">
    <location>
        <begin position="103"/>
        <end position="112"/>
    </location>
</feature>
<feature type="compositionally biased region" description="Low complexity" evidence="6">
    <location>
        <begin position="123"/>
        <end position="138"/>
    </location>
</feature>
<feature type="active site" evidence="5">
    <location>
        <position position="90"/>
    </location>
</feature>
<feature type="active site" evidence="5">
    <location>
        <position position="274"/>
    </location>
</feature>
<feature type="binding site" evidence="8 22">
    <location>
        <begin position="90"/>
        <end position="92"/>
    </location>
    <ligand>
        <name>pepstatin A</name>
        <dbReference type="ChEBI" id="CHEBI:190525"/>
        <note>inhibitor</note>
    </ligand>
</feature>
<feature type="binding site" evidence="8 22">
    <location>
        <begin position="140"/>
        <end position="143"/>
    </location>
    <ligand>
        <name>pepstatin A</name>
        <dbReference type="ChEBI" id="CHEBI:190525"/>
        <note>inhibitor</note>
    </ligand>
</feature>
<feature type="binding site" evidence="21 22">
    <location>
        <position position="188"/>
    </location>
    <ligand>
        <name>Zn(2+)</name>
        <dbReference type="ChEBI" id="CHEBI:29105"/>
    </ligand>
</feature>
<feature type="binding site" evidence="21 22">
    <location>
        <position position="248"/>
    </location>
    <ligand>
        <name>Zn(2+)</name>
        <dbReference type="ChEBI" id="CHEBI:29105"/>
    </ligand>
</feature>
<feature type="binding site" evidence="21 22">
    <location>
        <position position="254"/>
    </location>
    <ligand>
        <name>Zn(2+)</name>
        <dbReference type="ChEBI" id="CHEBI:29105"/>
    </ligand>
</feature>
<feature type="binding site" evidence="21 22">
    <location>
        <position position="270"/>
    </location>
    <ligand>
        <name>Zn(2+)</name>
        <dbReference type="ChEBI" id="CHEBI:29105"/>
    </ligand>
</feature>
<feature type="binding site" evidence="8 22">
    <location>
        <begin position="274"/>
        <end position="278"/>
    </location>
    <ligand>
        <name>pepstatin A</name>
        <dbReference type="ChEBI" id="CHEBI:190525"/>
        <note>inhibitor</note>
    </ligand>
</feature>
<feature type="glycosylation site" description="N-linked (GlcNAc...) asparagine" evidence="4">
    <location>
        <position position="42"/>
    </location>
</feature>
<feature type="glycosylation site" description="N-linked (GlcNAc...) asparagine" evidence="4">
    <location>
        <position position="313"/>
    </location>
</feature>
<feature type="disulfide bond" evidence="3">
    <location>
        <begin position="105"/>
        <end position="116"/>
    </location>
</feature>
<feature type="disulfide bond" evidence="3">
    <location>
        <begin position="312"/>
        <end position="350"/>
    </location>
</feature>
<feature type="strand" evidence="23">
    <location>
        <begin position="61"/>
        <end position="67"/>
    </location>
</feature>
<feature type="strand" evidence="23">
    <location>
        <begin position="69"/>
        <end position="78"/>
    </location>
</feature>
<feature type="turn" evidence="23">
    <location>
        <begin position="79"/>
        <end position="82"/>
    </location>
</feature>
<feature type="strand" evidence="23">
    <location>
        <begin position="83"/>
        <end position="90"/>
    </location>
</feature>
<feature type="strand" evidence="23">
    <location>
        <begin position="96"/>
        <end position="105"/>
    </location>
</feature>
<feature type="helix" evidence="23">
    <location>
        <begin position="115"/>
        <end position="117"/>
    </location>
</feature>
<feature type="helix" evidence="23">
    <location>
        <begin position="124"/>
        <end position="126"/>
    </location>
</feature>
<feature type="strand" evidence="23">
    <location>
        <begin position="131"/>
        <end position="140"/>
    </location>
</feature>
<feature type="strand" evidence="23">
    <location>
        <begin position="146"/>
        <end position="158"/>
    </location>
</feature>
<feature type="strand" evidence="23">
    <location>
        <begin position="161"/>
        <end position="174"/>
    </location>
</feature>
<feature type="strand" evidence="23">
    <location>
        <begin position="176"/>
        <end position="178"/>
    </location>
</feature>
<feature type="strand" evidence="23">
    <location>
        <begin position="180"/>
        <end position="182"/>
    </location>
</feature>
<feature type="helix" evidence="23">
    <location>
        <begin position="190"/>
        <end position="192"/>
    </location>
</feature>
<feature type="helix" evidence="23">
    <location>
        <begin position="197"/>
        <end position="203"/>
    </location>
</feature>
<feature type="strand" evidence="23">
    <location>
        <begin position="206"/>
        <end position="215"/>
    </location>
</feature>
<feature type="strand" evidence="23">
    <location>
        <begin position="222"/>
        <end position="228"/>
    </location>
</feature>
<feature type="strand" evidence="23">
    <location>
        <begin position="230"/>
        <end position="232"/>
    </location>
</feature>
<feature type="strand" evidence="23">
    <location>
        <begin position="235"/>
        <end position="244"/>
    </location>
</feature>
<feature type="strand" evidence="23">
    <location>
        <begin position="248"/>
        <end position="250"/>
    </location>
</feature>
<feature type="strand" evidence="23">
    <location>
        <begin position="252"/>
        <end position="260"/>
    </location>
</feature>
<feature type="strand" evidence="23">
    <location>
        <begin position="263"/>
        <end position="273"/>
    </location>
</feature>
<feature type="strand" evidence="23">
    <location>
        <begin position="278"/>
        <end position="282"/>
    </location>
</feature>
<feature type="helix" evidence="23">
    <location>
        <begin position="284"/>
        <end position="293"/>
    </location>
</feature>
<feature type="strand" evidence="23">
    <location>
        <begin position="297"/>
        <end position="300"/>
    </location>
</feature>
<feature type="strand" evidence="23">
    <location>
        <begin position="306"/>
        <end position="310"/>
    </location>
</feature>
<feature type="strand" evidence="23">
    <location>
        <begin position="316"/>
        <end position="323"/>
    </location>
</feature>
<feature type="strand" evidence="23">
    <location>
        <begin position="327"/>
        <end position="331"/>
    </location>
</feature>
<feature type="helix" evidence="23">
    <location>
        <begin position="332"/>
        <end position="335"/>
    </location>
</feature>
<feature type="strand" evidence="23">
    <location>
        <begin position="336"/>
        <end position="340"/>
    </location>
</feature>
<feature type="strand" evidence="23">
    <location>
        <begin position="346"/>
        <end position="356"/>
    </location>
</feature>
<feature type="helix" evidence="23">
    <location>
        <begin position="364"/>
        <end position="367"/>
    </location>
</feature>
<feature type="strand" evidence="23">
    <location>
        <begin position="370"/>
        <end position="375"/>
    </location>
</feature>
<feature type="turn" evidence="23">
    <location>
        <begin position="376"/>
        <end position="379"/>
    </location>
</feature>
<feature type="strand" evidence="23">
    <location>
        <begin position="380"/>
        <end position="386"/>
    </location>
</feature>
<feature type="strand" evidence="23">
    <location>
        <begin position="394"/>
        <end position="396"/>
    </location>
</feature>
<accession>P0CY29</accession>
<accession>A0A1D8PKC8</accession>
<accession>P43092</accession>
<accession>Q5ANA2</accession>
<reference key="1">
    <citation type="journal article" date="2004" name="Proc. Natl. Acad. Sci. U.S.A.">
        <title>The diploid genome sequence of Candida albicans.</title>
        <authorList>
            <person name="Jones T."/>
            <person name="Federspiel N.A."/>
            <person name="Chibana H."/>
            <person name="Dungan J."/>
            <person name="Kalman S."/>
            <person name="Magee B.B."/>
            <person name="Newport G."/>
            <person name="Thorstenson Y.R."/>
            <person name="Agabian N."/>
            <person name="Magee P.T."/>
            <person name="Davis R.W."/>
            <person name="Scherer S."/>
        </authorList>
    </citation>
    <scope>NUCLEOTIDE SEQUENCE [LARGE SCALE GENOMIC DNA]</scope>
    <source>
        <strain>SC5314 / ATCC MYA-2876</strain>
    </source>
</reference>
<reference key="2">
    <citation type="journal article" date="2007" name="Genome Biol.">
        <title>Assembly of the Candida albicans genome into sixteen supercontigs aligned on the eight chromosomes.</title>
        <authorList>
            <person name="van het Hoog M."/>
            <person name="Rast T.J."/>
            <person name="Martchenko M."/>
            <person name="Grindle S."/>
            <person name="Dignard D."/>
            <person name="Hogues H."/>
            <person name="Cuomo C."/>
            <person name="Berriman M."/>
            <person name="Scherer S."/>
            <person name="Magee B.B."/>
            <person name="Whiteway M."/>
            <person name="Chibana H."/>
            <person name="Nantel A."/>
            <person name="Magee P.T."/>
        </authorList>
    </citation>
    <scope>GENOME REANNOTATION</scope>
    <source>
        <strain>SC5314 / ATCC MYA-2876</strain>
    </source>
</reference>
<reference key="3">
    <citation type="journal article" date="2013" name="Genome Biol.">
        <title>Assembly of a phased diploid Candida albicans genome facilitates allele-specific measurements and provides a simple model for repeat and indel structure.</title>
        <authorList>
            <person name="Muzzey D."/>
            <person name="Schwartz K."/>
            <person name="Weissman J.S."/>
            <person name="Sherlock G."/>
        </authorList>
    </citation>
    <scope>NUCLEOTIDE SEQUENCE [LARGE SCALE GENOMIC DNA]</scope>
    <scope>GENOME REANNOTATION</scope>
    <source>
        <strain>SC5314 / ATCC MYA-2876</strain>
    </source>
</reference>
<reference key="4">
    <citation type="journal article" date="1993" name="J. Bacteriol.">
        <title>Three distinct secreted aspartyl proteinases in Candida albicans.</title>
        <authorList>
            <person name="White T.C."/>
            <person name="Miyasaki S.H."/>
            <person name="Agabian N."/>
        </authorList>
    </citation>
    <scope>IDENTIFICATIO</scope>
    <scope>INDUCTION</scope>
</reference>
<reference key="5">
    <citation type="journal article" date="1997" name="Microbiology">
        <title>Analysis of secreted aspartic proteinases from Candida albicans: purification and characterization of individual Sap1, Sap2 and Sap3 isoenzymes.</title>
        <authorList>
            <person name="Smolenski G."/>
            <person name="Sullivan P.A."/>
            <person name="Cutfield S.M."/>
            <person name="Cutfield J.F."/>
        </authorList>
    </citation>
    <scope>CATALYTIC ACTIVITY</scope>
    <scope>BIOPHYSICOCHEMICAL PROPERTIES</scope>
</reference>
<reference key="6">
    <citation type="journal article" date="1999" name="J. Infect. Dis.">
        <title>Evidence that members of the secretory aspartyl proteinase gene family, in particular SAP2, are virulence factors for Candida vaginitis.</title>
        <authorList>
            <person name="De Bernardis F."/>
            <person name="Arancia S."/>
            <person name="Morelli L."/>
            <person name="Hube B."/>
            <person name="Sanglard D."/>
            <person name="Schafer W."/>
            <person name="Cassone A."/>
        </authorList>
    </citation>
    <scope>SUBCELLULAR LOCATION</scope>
    <scope>CATALYTIC ACTIVITY</scope>
</reference>
<reference key="7">
    <citation type="journal article" date="2001" name="J. Med. Microbiol.">
        <title>Different isoforms of secreted aspartyl proteinases (Sap) are expressed by Candida albicans during oral and cutaneous candidosis in vivo.</title>
        <authorList>
            <person name="Schaller M."/>
            <person name="Januschke E."/>
            <person name="Schackert C."/>
            <person name="Woerle B."/>
            <person name="Korting H.C."/>
        </authorList>
    </citation>
    <scope>FUNCTION</scope>
</reference>
<reference key="8">
    <citation type="journal article" date="2009" name="Mol. Immunol.">
        <title>The yeast Candida albicans evades human complement attack by secretion of aspartic proteases.</title>
        <authorList>
            <person name="Gropp K."/>
            <person name="Schild L."/>
            <person name="Schindler S."/>
            <person name="Hube B."/>
            <person name="Zipfel P.F."/>
            <person name="Skerka C."/>
        </authorList>
    </citation>
    <scope>FUNCTION</scope>
</reference>
<reference key="9">
    <citation type="journal article" date="2010" name="Infect. Immun.">
        <title>The inflammatory response induced by aspartic proteases of Candida albicans is independent of proteolytic activity.</title>
        <authorList>
            <person name="Pietrella D."/>
            <person name="Rachini A."/>
            <person name="Pandey N."/>
            <person name="Schild L."/>
            <person name="Netea M."/>
            <person name="Bistoni F."/>
            <person name="Hube B."/>
            <person name="Vecchiarelli A."/>
        </authorList>
    </citation>
    <scope>FUNCTION</scope>
</reference>
<reference key="10">
    <citation type="journal article" date="2011" name="J. Biochem.">
        <title>Comprehensive characterization of secreted aspartic proteases encoded by a virulence gene family in Candida albicans.</title>
        <authorList>
            <person name="Aoki W."/>
            <person name="Kitahara N."/>
            <person name="Miura N."/>
            <person name="Morisaka H."/>
            <person name="Yamamoto Y."/>
            <person name="Kuroda K."/>
            <person name="Ueda M."/>
        </authorList>
    </citation>
    <scope>CATALYTIC ACTIVITY</scope>
    <scope>BIOPHYSICOCHEMICAL PROPERTIES</scope>
</reference>
<reference key="11">
    <citation type="journal article" date="2013" name="Biochem. Pharmacol.">
        <title>Design, synthesis, inhibition studies, and molecular modeling of pepstatin analogues addressing different secreted aspartic proteinases of Candida albicans.</title>
        <authorList>
            <person name="Cadicamo C.D."/>
            <person name="Mortier J."/>
            <person name="Wolber G."/>
            <person name="Hell M."/>
            <person name="Heinrich I.E."/>
            <person name="Michel D."/>
            <person name="Semlin L."/>
            <person name="Berger U."/>
            <person name="Korting H.C."/>
            <person name="Holtje H.D."/>
            <person name="Koksch B."/>
            <person name="Borelli C."/>
        </authorList>
    </citation>
    <scope>ACTIVITY REGULATION</scope>
</reference>
<reference key="12">
    <citation type="journal article" date="2012" name="Pol. J. Microbiol.">
        <title>In vitro study of secreted aspartyl proteinases Sap1 to Sap3 and Sap4 to Sap6 expression in Candida albicans pleomorphic forms.</title>
        <authorList>
            <person name="Staniszewska M."/>
            <person name="Bondaryk M."/>
            <person name="Siennicka K."/>
            <person name="Kurek A."/>
            <person name="Orlowski J."/>
            <person name="Schaller M."/>
            <person name="Kurzatkowski W."/>
        </authorList>
    </citation>
    <scope>INDUCTION</scope>
</reference>
<reference key="13">
    <citation type="journal article" date="2013" name="Peptides">
        <title>Secreted aspartic peptidases of Candida albicans liberate bactericidal hemocidins from human hemoglobin.</title>
        <authorList>
            <person name="Bochenska O."/>
            <person name="Rapala-Kozik M."/>
            <person name="Wolak N."/>
            <person name="Bras G."/>
            <person name="Kozik A."/>
            <person name="Dubin A."/>
            <person name="Aoki W."/>
            <person name="Ueda M."/>
            <person name="Mak P."/>
        </authorList>
    </citation>
    <scope>FUNCTION</scope>
</reference>
<reference key="14">
    <citation type="journal article" date="2016" name="Acta Biochim. Pol.">
        <title>The action of ten secreted aspartic proteases of pathogenic yeast Candida albicans on major human salivary antimicrobial peptide, histatin 5.</title>
        <authorList>
            <person name="Bochenska O."/>
            <person name="Rapala-Kozik M."/>
            <person name="Wolak N."/>
            <person name="Aoki W."/>
            <person name="Ueda M."/>
            <person name="Kozik A."/>
        </authorList>
    </citation>
    <scope>FUNCTION</scope>
    <scope>CATALYTIC ACTIVITY</scope>
    <scope>BIOPHYSICOCHEMICAL PROPERTIES</scope>
</reference>
<reference evidence="21 22" key="15">
    <citation type="journal article" date="2007" name="Proteins">
        <title>The crystal structure of the secreted aspartic proteinase 3 from Candida albicans and its complex with pepstatin A.</title>
        <authorList>
            <person name="Borelli C."/>
            <person name="Ruge E."/>
            <person name="Schaller M."/>
            <person name="Monod M."/>
            <person name="Korting H.C."/>
            <person name="Huber R."/>
            <person name="Maskos K."/>
        </authorList>
    </citation>
    <scope>X-RAY CRYSTALLOGRAPHY (1.9 ANGSTROMS) OF 59-396 IN COMPLEXES WITH ZINC AND PEPSTATIN A INHIBITOR</scope>
</reference>
<organism>
    <name type="scientific">Candida albicans (strain SC5314 / ATCC MYA-2876)</name>
    <name type="common">Yeast</name>
    <dbReference type="NCBI Taxonomy" id="237561"/>
    <lineage>
        <taxon>Eukaryota</taxon>
        <taxon>Fungi</taxon>
        <taxon>Dikarya</taxon>
        <taxon>Ascomycota</taxon>
        <taxon>Saccharomycotina</taxon>
        <taxon>Pichiomycetes</taxon>
        <taxon>Debaryomycetaceae</taxon>
        <taxon>Candida/Lodderomyces clade</taxon>
        <taxon>Candida</taxon>
    </lineage>
</organism>
<comment type="function">
    <text evidence="7 9 10 14">Secreted aspartic peptidases (SAPs) are a group of ten acidic hydrolases considered as key virulence factors (PubMed:11478679, PubMed:19880183, PubMed:20713630, PubMed:23927842). These enzymes supply the fungus with nutrient amino acids as well as are able to degrade the selected host's proteins involved in the immune defense (PubMed:11478679, PubMed:19880183, PubMed:23927842). Induces host inflammatory cytokine production in a proteolytic activity-independent way (PubMed:20713630). Moreover, acts toward human hemoglobin though limited proteolysis to generate a variety of antimicrobial hemocidins, enabling to compete with the other microorganisms of the same physiological niche using the microbicidal peptides generated from the host protein (PubMed:23927842).</text>
</comment>
<comment type="function">
    <text evidence="15">Plays a key role in defense against host by cleaving histatin-5 (Hst 5), a peptide from human saliva that carries out fungicidal activity (PubMed:27390786). The cleavage rate decreases in an order of SAP2 &gt; SAP9 &gt; SAP3 &gt; SAP7 &gt; SAP4 &gt; SAP1 &gt; SAP8 (PubMed:27390786). The first cleavage occurs between residues 'Lys-17' and 'His-18' of Hst 5, giving DSHAKRHHGYKRKFHEK and HHSHRGY peptides (PubMed:27390786). Simultaneously, the DSHAKRHHGYKRK peptide is also formed (PubMed:27390786). Further fragmentation by SAP3 results in DSHAKRHHGY and KRKFHEK products (PubMed:27390786).</text>
</comment>
<comment type="catalytic activity">
    <reaction evidence="11 15 17 18">
        <text>Preferential cleavage at the carboxyl of hydrophobic amino acids, but fails to cleave 15-Leu-|-Tyr-16, 16-Tyr-|-Leu-17 and 24-Phe-|-Phe-25 of insulin B chain. Activates trypsinogen, and degrades keratin.</text>
        <dbReference type="EC" id="3.4.23.24"/>
    </reaction>
</comment>
<comment type="activity regulation">
    <text evidence="12">Inhibited by pepstatin A analogs.</text>
</comment>
<comment type="biophysicochemical properties">
    <phDependence>
        <text evidence="11 15 17">Optimum pH is 3.0 using BSA or casein-resorufin as substrates, and 6.0-7.0, the pH of the saliva, for cleavage of Hst 5.</text>
    </phDependence>
</comment>
<comment type="subunit">
    <text evidence="2">Monomer.</text>
</comment>
<comment type="subcellular location">
    <subcellularLocation>
        <location evidence="3">Secreted</location>
    </subcellularLocation>
</comment>
<comment type="induction">
    <text evidence="13 16">Expressed during development of germ tubes, pseudohyphae, true hyphae and opaque cells.</text>
</comment>
<comment type="similarity">
    <text evidence="20">Belongs to the peptidase A1 family.</text>
</comment>
<protein>
    <recommendedName>
        <fullName evidence="19">Secreted aspartic protease 3</fullName>
        <shortName evidence="20">ACP 3</shortName>
        <shortName evidence="20">Aspartate protease 3</shortName>
        <ecNumber evidence="11 15 17 18">3.4.23.24</ecNumber>
    </recommendedName>
    <alternativeName>
        <fullName evidence="20">Candidapepsin-3</fullName>
    </alternativeName>
</protein>
<proteinExistence type="evidence at protein level"/>
<sequence>MFLKNIFIALAIALLADATPTTFNNSPGFVALNFDVIKTHKNVTGPQGEINTNVNVKRQTVPVKLINEQVSYASDITVGSNKQKLTVVIDTGSSDLWVPDSQVSCQAGQGQDPNFCKNEGTYSPSSSSSSQNLNSPFSIEYGDGTTSQGTWYKDTIGFGGISITKQQFADVTSTSVDQGILGIGYKTHEAEGNYDNVPVTLKNQGIISKNAYSLYLNSRQATSGQIIFGGVDNAKYSGTLIALPVTSDNELRIHLNTVKVAGQSINADVDVLLDSGTTITYLQQGVADQVISAFNGQETYDANGNLFYLVDCNLSGSVDFAFDKNAKISVPASEFTAPLYTEDGQVYDQCQLLFGTSDYNILGDNFLRSAYIVYDLDDNEISLAQVKYTTASNIAALT</sequence>